<name>LIPB_BARHE</name>
<comment type="function">
    <text evidence="1">Catalyzes the transfer of endogenously produced octanoic acid from octanoyl-acyl-carrier-protein onto the lipoyl domains of lipoate-dependent enzymes. Lipoyl-ACP can also act as a substrate although octanoyl-ACP is likely to be the physiological substrate.</text>
</comment>
<comment type="catalytic activity">
    <reaction evidence="1">
        <text>octanoyl-[ACP] + L-lysyl-[protein] = N(6)-octanoyl-L-lysyl-[protein] + holo-[ACP] + H(+)</text>
        <dbReference type="Rhea" id="RHEA:17665"/>
        <dbReference type="Rhea" id="RHEA-COMP:9636"/>
        <dbReference type="Rhea" id="RHEA-COMP:9685"/>
        <dbReference type="Rhea" id="RHEA-COMP:9752"/>
        <dbReference type="Rhea" id="RHEA-COMP:9928"/>
        <dbReference type="ChEBI" id="CHEBI:15378"/>
        <dbReference type="ChEBI" id="CHEBI:29969"/>
        <dbReference type="ChEBI" id="CHEBI:64479"/>
        <dbReference type="ChEBI" id="CHEBI:78463"/>
        <dbReference type="ChEBI" id="CHEBI:78809"/>
        <dbReference type="EC" id="2.3.1.181"/>
    </reaction>
</comment>
<comment type="pathway">
    <text evidence="1">Protein modification; protein lipoylation via endogenous pathway; protein N(6)-(lipoyl)lysine from octanoyl-[acyl-carrier-protein]: step 1/2.</text>
</comment>
<comment type="subcellular location">
    <subcellularLocation>
        <location evidence="1">Cytoplasm</location>
    </subcellularLocation>
</comment>
<comment type="miscellaneous">
    <text evidence="1">In the reaction, the free carboxyl group of octanoic acid is attached via an amide linkage to the epsilon-amino group of a specific lysine residue of lipoyl domains of lipoate-dependent enzymes.</text>
</comment>
<comment type="similarity">
    <text evidence="1">Belongs to the LipB family.</text>
</comment>
<evidence type="ECO:0000255" key="1">
    <source>
        <dbReference type="HAMAP-Rule" id="MF_00013"/>
    </source>
</evidence>
<evidence type="ECO:0000255" key="2">
    <source>
        <dbReference type="PROSITE-ProRule" id="PRU01067"/>
    </source>
</evidence>
<sequence>MTFELKYTDRSYLPDQFKAISGNPPVEWKVTNNLVEYPEALRYMQERVENILAQNAHEQVWLLEHPSLYTAGTSAKKKDLLTPHLFPVYEAGRGGEFTYHGPGQRIAYIMLDLKRRRQDIRAFISALEEWIIQMLAKFNIKGERREDRVGVWVQRHSCQSTQNSLYSEDKIAAIGIRVRKWVSFHGVSINVDPNLAHYSGIVPCGITNHGVTSFLDLGLPTKMHDIDIALKQSFEQIFGPIIDIS</sequence>
<reference key="1">
    <citation type="journal article" date="2004" name="Proc. Natl. Acad. Sci. U.S.A.">
        <title>The louse-borne human pathogen Bartonella quintana is a genomic derivative of the zoonotic agent Bartonella henselae.</title>
        <authorList>
            <person name="Alsmark U.C.M."/>
            <person name="Frank A.C."/>
            <person name="Karlberg E.O."/>
            <person name="Legault B.-A."/>
            <person name="Ardell D.H."/>
            <person name="Canbaeck B."/>
            <person name="Eriksson A.-S."/>
            <person name="Naeslund A.K."/>
            <person name="Handley S.A."/>
            <person name="Huvet M."/>
            <person name="La Scola B."/>
            <person name="Holmberg M."/>
            <person name="Andersson S.G.E."/>
        </authorList>
    </citation>
    <scope>NUCLEOTIDE SEQUENCE [LARGE SCALE GENOMIC DNA]</scope>
    <source>
        <strain>ATCC 49882 / DSM 28221 / CCUG 30454 / Houston 1</strain>
    </source>
</reference>
<dbReference type="EC" id="2.3.1.181" evidence="1"/>
<dbReference type="EMBL" id="BX897699">
    <property type="protein sequence ID" value="CAF27585.1"/>
    <property type="molecule type" value="Genomic_DNA"/>
</dbReference>
<dbReference type="RefSeq" id="WP_011180686.1">
    <property type="nucleotide sequence ID" value="NZ_LRIJ02000001.1"/>
</dbReference>
<dbReference type="SMR" id="Q6G3I3"/>
<dbReference type="PaxDb" id="283166-BH07850"/>
<dbReference type="EnsemblBacteria" id="CAF27585">
    <property type="protein sequence ID" value="CAF27585"/>
    <property type="gene ID" value="BH07850"/>
</dbReference>
<dbReference type="GeneID" id="92985546"/>
<dbReference type="KEGG" id="bhe:BH07850"/>
<dbReference type="eggNOG" id="COG0321">
    <property type="taxonomic scope" value="Bacteria"/>
</dbReference>
<dbReference type="OrthoDB" id="9787061at2"/>
<dbReference type="UniPathway" id="UPA00538">
    <property type="reaction ID" value="UER00592"/>
</dbReference>
<dbReference type="Proteomes" id="UP000000421">
    <property type="component" value="Chromosome"/>
</dbReference>
<dbReference type="GO" id="GO:0005737">
    <property type="term" value="C:cytoplasm"/>
    <property type="evidence" value="ECO:0007669"/>
    <property type="project" value="UniProtKB-SubCell"/>
</dbReference>
<dbReference type="GO" id="GO:0033819">
    <property type="term" value="F:lipoyl(octanoyl) transferase activity"/>
    <property type="evidence" value="ECO:0007669"/>
    <property type="project" value="UniProtKB-EC"/>
</dbReference>
<dbReference type="GO" id="GO:0036211">
    <property type="term" value="P:protein modification process"/>
    <property type="evidence" value="ECO:0007669"/>
    <property type="project" value="InterPro"/>
</dbReference>
<dbReference type="CDD" id="cd16444">
    <property type="entry name" value="LipB"/>
    <property type="match status" value="1"/>
</dbReference>
<dbReference type="Gene3D" id="3.30.930.10">
    <property type="entry name" value="Bira Bifunctional Protein, Domain 2"/>
    <property type="match status" value="1"/>
</dbReference>
<dbReference type="HAMAP" id="MF_00013">
    <property type="entry name" value="LipB"/>
    <property type="match status" value="1"/>
</dbReference>
<dbReference type="InterPro" id="IPR045864">
    <property type="entry name" value="aa-tRNA-synth_II/BPL/LPL"/>
</dbReference>
<dbReference type="InterPro" id="IPR004143">
    <property type="entry name" value="BPL_LPL_catalytic"/>
</dbReference>
<dbReference type="InterPro" id="IPR000544">
    <property type="entry name" value="Octanoyltransferase"/>
</dbReference>
<dbReference type="InterPro" id="IPR020605">
    <property type="entry name" value="Octanoyltransferase_CS"/>
</dbReference>
<dbReference type="NCBIfam" id="TIGR00214">
    <property type="entry name" value="lipB"/>
    <property type="match status" value="1"/>
</dbReference>
<dbReference type="NCBIfam" id="NF010921">
    <property type="entry name" value="PRK14341.1"/>
    <property type="match status" value="1"/>
</dbReference>
<dbReference type="NCBIfam" id="NF010925">
    <property type="entry name" value="PRK14345.1"/>
    <property type="match status" value="1"/>
</dbReference>
<dbReference type="PANTHER" id="PTHR10993:SF7">
    <property type="entry name" value="LIPOYLTRANSFERASE 2, MITOCHONDRIAL-RELATED"/>
    <property type="match status" value="1"/>
</dbReference>
<dbReference type="PANTHER" id="PTHR10993">
    <property type="entry name" value="OCTANOYLTRANSFERASE"/>
    <property type="match status" value="1"/>
</dbReference>
<dbReference type="Pfam" id="PF21948">
    <property type="entry name" value="LplA-B_cat"/>
    <property type="match status" value="1"/>
</dbReference>
<dbReference type="PIRSF" id="PIRSF016262">
    <property type="entry name" value="LPLase"/>
    <property type="match status" value="1"/>
</dbReference>
<dbReference type="SUPFAM" id="SSF55681">
    <property type="entry name" value="Class II aaRS and biotin synthetases"/>
    <property type="match status" value="1"/>
</dbReference>
<dbReference type="PROSITE" id="PS51733">
    <property type="entry name" value="BPL_LPL_CATALYTIC"/>
    <property type="match status" value="1"/>
</dbReference>
<dbReference type="PROSITE" id="PS01313">
    <property type="entry name" value="LIPB"/>
    <property type="match status" value="1"/>
</dbReference>
<organism>
    <name type="scientific">Bartonella henselae (strain ATCC 49882 / DSM 28221 / CCUG 30454 / Houston 1)</name>
    <name type="common">Rochalimaea henselae</name>
    <dbReference type="NCBI Taxonomy" id="283166"/>
    <lineage>
        <taxon>Bacteria</taxon>
        <taxon>Pseudomonadati</taxon>
        <taxon>Pseudomonadota</taxon>
        <taxon>Alphaproteobacteria</taxon>
        <taxon>Hyphomicrobiales</taxon>
        <taxon>Bartonellaceae</taxon>
        <taxon>Bartonella</taxon>
    </lineage>
</organism>
<accession>Q6G3I3</accession>
<proteinExistence type="inferred from homology"/>
<protein>
    <recommendedName>
        <fullName evidence="1">Octanoyltransferase</fullName>
        <ecNumber evidence="1">2.3.1.181</ecNumber>
    </recommendedName>
    <alternativeName>
        <fullName evidence="1">Lipoate-protein ligase B</fullName>
    </alternativeName>
    <alternativeName>
        <fullName evidence="1">Lipoyl/octanoyl transferase</fullName>
    </alternativeName>
    <alternativeName>
        <fullName evidence="1">Octanoyl-[acyl-carrier-protein]-protein N-octanoyltransferase</fullName>
    </alternativeName>
</protein>
<feature type="chain" id="PRO_0000062811" description="Octanoyltransferase">
    <location>
        <begin position="1"/>
        <end position="245"/>
    </location>
</feature>
<feature type="domain" description="BPL/LPL catalytic" evidence="2">
    <location>
        <begin position="54"/>
        <end position="242"/>
    </location>
</feature>
<feature type="active site" description="Acyl-thioester intermediate" evidence="1">
    <location>
        <position position="204"/>
    </location>
</feature>
<feature type="binding site" evidence="1">
    <location>
        <begin position="93"/>
        <end position="100"/>
    </location>
    <ligand>
        <name>substrate</name>
    </ligand>
</feature>
<feature type="binding site" evidence="1">
    <location>
        <begin position="173"/>
        <end position="175"/>
    </location>
    <ligand>
        <name>substrate</name>
    </ligand>
</feature>
<feature type="binding site" evidence="1">
    <location>
        <begin position="186"/>
        <end position="188"/>
    </location>
    <ligand>
        <name>substrate</name>
    </ligand>
</feature>
<feature type="site" description="Lowers pKa of active site Cys" evidence="1">
    <location>
        <position position="170"/>
    </location>
</feature>
<gene>
    <name evidence="1" type="primary">lipB</name>
    <name type="ordered locus">BH07850</name>
</gene>
<keyword id="KW-0012">Acyltransferase</keyword>
<keyword id="KW-0963">Cytoplasm</keyword>
<keyword id="KW-0808">Transferase</keyword>